<dbReference type="EMBL" id="U28371">
    <property type="protein sequence ID" value="AAB68053.1"/>
    <property type="molecule type" value="Genomic_DNA"/>
</dbReference>
<dbReference type="EMBL" id="AY723870">
    <property type="protein sequence ID" value="AAU09787.1"/>
    <property type="molecule type" value="Genomic_DNA"/>
</dbReference>
<dbReference type="EMBL" id="BK006949">
    <property type="protein sequence ID" value="DAA11568.1"/>
    <property type="molecule type" value="Genomic_DNA"/>
</dbReference>
<dbReference type="PIR" id="S61140">
    <property type="entry name" value="S61140"/>
</dbReference>
<dbReference type="RefSeq" id="NP_015482.1">
    <property type="nucleotide sequence ID" value="NM_001184253.1"/>
</dbReference>
<dbReference type="SMR" id="Q06451"/>
<dbReference type="BioGRID" id="36323">
    <property type="interactions" value="77"/>
</dbReference>
<dbReference type="DIP" id="DIP-3907N"/>
<dbReference type="FunCoup" id="Q06451">
    <property type="interactions" value="82"/>
</dbReference>
<dbReference type="IntAct" id="Q06451">
    <property type="interactions" value="20"/>
</dbReference>
<dbReference type="MINT" id="Q06451"/>
<dbReference type="STRING" id="4932.YPR156C"/>
<dbReference type="TCDB" id="2.A.1.2.66">
    <property type="family name" value="the major facilitator superfamily (mfs)"/>
</dbReference>
<dbReference type="iPTMnet" id="Q06451"/>
<dbReference type="PaxDb" id="4932-YPR156C"/>
<dbReference type="PeptideAtlas" id="Q06451"/>
<dbReference type="EnsemblFungi" id="YPR156C_mRNA">
    <property type="protein sequence ID" value="YPR156C"/>
    <property type="gene ID" value="YPR156C"/>
</dbReference>
<dbReference type="GeneID" id="856279"/>
<dbReference type="KEGG" id="sce:YPR156C"/>
<dbReference type="AGR" id="SGD:S000006360"/>
<dbReference type="SGD" id="S000006360">
    <property type="gene designation" value="TPO3"/>
</dbReference>
<dbReference type="VEuPathDB" id="FungiDB:YPR156C"/>
<dbReference type="eggNOG" id="KOG0255">
    <property type="taxonomic scope" value="Eukaryota"/>
</dbReference>
<dbReference type="GeneTree" id="ENSGT00940000176486"/>
<dbReference type="HOGENOM" id="CLU_008455_11_5_1"/>
<dbReference type="InParanoid" id="Q06451"/>
<dbReference type="OMA" id="TMIMTEP"/>
<dbReference type="OrthoDB" id="3936150at2759"/>
<dbReference type="BioCyc" id="YEAST:G3O-34287-MONOMER"/>
<dbReference type="BioGRID-ORCS" id="856279">
    <property type="hits" value="5 hits in 10 CRISPR screens"/>
</dbReference>
<dbReference type="PRO" id="PR:Q06451"/>
<dbReference type="Proteomes" id="UP000002311">
    <property type="component" value="Chromosome XVI"/>
</dbReference>
<dbReference type="RNAct" id="Q06451">
    <property type="molecule type" value="protein"/>
</dbReference>
<dbReference type="GO" id="GO:0071944">
    <property type="term" value="C:cell periphery"/>
    <property type="evidence" value="ECO:0007005"/>
    <property type="project" value="SGD"/>
</dbReference>
<dbReference type="GO" id="GO:0000329">
    <property type="term" value="C:fungal-type vacuole membrane"/>
    <property type="evidence" value="ECO:0000315"/>
    <property type="project" value="SGD"/>
</dbReference>
<dbReference type="GO" id="GO:0005886">
    <property type="term" value="C:plasma membrane"/>
    <property type="evidence" value="ECO:0000314"/>
    <property type="project" value="SGD"/>
</dbReference>
<dbReference type="GO" id="GO:0015297">
    <property type="term" value="F:antiporter activity"/>
    <property type="evidence" value="ECO:0007669"/>
    <property type="project" value="UniProtKB-KW"/>
</dbReference>
<dbReference type="GO" id="GO:0000297">
    <property type="term" value="F:spermine transmembrane transporter activity"/>
    <property type="evidence" value="ECO:0000315"/>
    <property type="project" value="SGD"/>
</dbReference>
<dbReference type="GO" id="GO:0000296">
    <property type="term" value="P:spermine transport"/>
    <property type="evidence" value="ECO:0000315"/>
    <property type="project" value="SGD"/>
</dbReference>
<dbReference type="GO" id="GO:0055085">
    <property type="term" value="P:transmembrane transport"/>
    <property type="evidence" value="ECO:0000318"/>
    <property type="project" value="GO_Central"/>
</dbReference>
<dbReference type="CDD" id="cd17323">
    <property type="entry name" value="MFS_Tpo1_MDR_like"/>
    <property type="match status" value="1"/>
</dbReference>
<dbReference type="FunFam" id="1.20.1250.20:FF:000011">
    <property type="entry name" value="MFS multidrug transporter, putative"/>
    <property type="match status" value="1"/>
</dbReference>
<dbReference type="Gene3D" id="1.20.1250.20">
    <property type="entry name" value="MFS general substrate transporter like domains"/>
    <property type="match status" value="1"/>
</dbReference>
<dbReference type="InterPro" id="IPR011701">
    <property type="entry name" value="MFS"/>
</dbReference>
<dbReference type="InterPro" id="IPR020846">
    <property type="entry name" value="MFS_dom"/>
</dbReference>
<dbReference type="InterPro" id="IPR036259">
    <property type="entry name" value="MFS_trans_sf"/>
</dbReference>
<dbReference type="PANTHER" id="PTHR23502">
    <property type="entry name" value="MAJOR FACILITATOR SUPERFAMILY"/>
    <property type="match status" value="1"/>
</dbReference>
<dbReference type="PANTHER" id="PTHR23502:SF132">
    <property type="entry name" value="POLYAMINE TRANSPORTER 2-RELATED"/>
    <property type="match status" value="1"/>
</dbReference>
<dbReference type="Pfam" id="PF07690">
    <property type="entry name" value="MFS_1"/>
    <property type="match status" value="1"/>
</dbReference>
<dbReference type="SUPFAM" id="SSF103473">
    <property type="entry name" value="MFS general substrate transporter"/>
    <property type="match status" value="1"/>
</dbReference>
<dbReference type="PROSITE" id="PS50850">
    <property type="entry name" value="MFS"/>
    <property type="match status" value="1"/>
</dbReference>
<sequence length="622" mass="68066">MNRQESINSFNSDETSSLSDVESQQPQQYIPSESGSKSNMAPNQLKLTRTETVKSLQDMGVSSKAPVPDVNAPQSSKNKIFPEEYTLETPTGLVPVATLHSIGRTSTAISRTRTRQIDGASSPSSNEDALESDNNEKGKEGDSSGANDEAPDLDPEIEFVTFVTGDPENPHNWPAWIRWSYTVLLSILVICVAYGSACISGGLGTVEKKYHVGMEAAILSVSLMVIGFSLGPLIWSPVSDLYGRRVAYFVSMGLYVIFNIPCALAPNLGSLLACRFLCGVWSSSGLCLVGGSIADMFPSETRGKAIAFFAFAPYVGPVVGPLVNGFISVSTGRMDLIFWVNMAFAGVMWIISSAIPETYAPVILKRKAARLRKETGNPKIMTEQEAQGVSMGEMMRACLLRPLYFSVTEPVLVATCFYVCLIYSLLYAFFFAFPVIFGELYGYKDNLVGLMFIPIVIGALWALATTFYCENKYLQIVKQRKPTPEDRLLGAKIGAPFAAIALWILGATAYKHIIWVGPASAGLAFGFGMVLIYYSLNNYIIDCYVQYASSALATKVFLRSAGGAAFPLFTIQMYHKLNLHWGSWLLAFISTAMIALPFAFSYWGKGLRHKLSKKDYSIDSIE</sequence>
<evidence type="ECO:0000255" key="1"/>
<evidence type="ECO:0000256" key="2">
    <source>
        <dbReference type="SAM" id="MobiDB-lite"/>
    </source>
</evidence>
<evidence type="ECO:0000269" key="3">
    <source>
    </source>
</evidence>
<evidence type="ECO:0000269" key="4">
    <source>
    </source>
</evidence>
<evidence type="ECO:0000269" key="5">
    <source>
    </source>
</evidence>
<evidence type="ECO:0000269" key="6">
    <source>
    </source>
</evidence>
<evidence type="ECO:0000269" key="7">
    <source>
    </source>
</evidence>
<evidence type="ECO:0000305" key="8"/>
<evidence type="ECO:0007744" key="9">
    <source>
    </source>
</evidence>
<evidence type="ECO:0007744" key="10">
    <source>
    </source>
</evidence>
<evidence type="ECO:0007744" key="11">
    <source>
    </source>
</evidence>
<comment type="function">
    <text evidence="3 4">Cell membrane polyamine/proton antiporter, involved in the detoxification of excess polyamines in the cytoplasm. Recognizes spermine, but not spermidine.</text>
</comment>
<comment type="interaction">
    <interactant intactId="EBI-34275">
        <id>Q06451</id>
    </interactant>
    <interactant intactId="EBI-2044753">
        <id>P53283</id>
        <label>TPO2</label>
    </interactant>
    <organismsDiffer>false</organismsDiffer>
    <experiments>3</experiments>
</comment>
<comment type="subcellular location">
    <subcellularLocation>
        <location evidence="4 5">Cell membrane</location>
        <topology evidence="4 5">Multi-pass membrane protein</topology>
    </subcellularLocation>
</comment>
<comment type="induction">
    <text evidence="7">By transcription factor HAA1 in response to acetaldehyde accumulation.</text>
</comment>
<comment type="miscellaneous">
    <text evidence="6">Present with 2760 molecules/cell in log phase SD medium.</text>
</comment>
<comment type="similarity">
    <text evidence="8">Belongs to the major facilitator superfamily. DHA1 family. Polyamines/proton antiporter (TC 2.A.1.2.16) subfamily.</text>
</comment>
<gene>
    <name type="primary">TPO3</name>
    <name type="ordered locus">YPR156C</name>
    <name type="ORF">P9584.7</name>
</gene>
<proteinExistence type="evidence at protein level"/>
<name>TPO3_YEAST</name>
<accession>Q06451</accession>
<accession>D6W4F2</accession>
<keyword id="KW-0050">Antiport</keyword>
<keyword id="KW-1003">Cell membrane</keyword>
<keyword id="KW-0472">Membrane</keyword>
<keyword id="KW-0597">Phosphoprotein</keyword>
<keyword id="KW-1185">Reference proteome</keyword>
<keyword id="KW-0812">Transmembrane</keyword>
<keyword id="KW-1133">Transmembrane helix</keyword>
<keyword id="KW-0813">Transport</keyword>
<organism>
    <name type="scientific">Saccharomyces cerevisiae (strain ATCC 204508 / S288c)</name>
    <name type="common">Baker's yeast</name>
    <dbReference type="NCBI Taxonomy" id="559292"/>
    <lineage>
        <taxon>Eukaryota</taxon>
        <taxon>Fungi</taxon>
        <taxon>Dikarya</taxon>
        <taxon>Ascomycota</taxon>
        <taxon>Saccharomycotina</taxon>
        <taxon>Saccharomycetes</taxon>
        <taxon>Saccharomycetales</taxon>
        <taxon>Saccharomycetaceae</taxon>
        <taxon>Saccharomyces</taxon>
    </lineage>
</organism>
<feature type="chain" id="PRO_0000262731" description="Polyamine transporter 3">
    <location>
        <begin position="1"/>
        <end position="622"/>
    </location>
</feature>
<feature type="topological domain" description="Cytoplasmic" evidence="1">
    <location>
        <begin position="1"/>
        <end position="182"/>
    </location>
</feature>
<feature type="transmembrane region" description="Helical" evidence="1">
    <location>
        <begin position="183"/>
        <end position="203"/>
    </location>
</feature>
<feature type="topological domain" description="Extracellular" evidence="1">
    <location>
        <begin position="204"/>
        <end position="215"/>
    </location>
</feature>
<feature type="transmembrane region" description="Helical" evidence="1">
    <location>
        <begin position="216"/>
        <end position="236"/>
    </location>
</feature>
<feature type="topological domain" description="Cytoplasmic" evidence="1">
    <location>
        <begin position="237"/>
        <end position="245"/>
    </location>
</feature>
<feature type="transmembrane region" description="Helical" evidence="1">
    <location>
        <begin position="246"/>
        <end position="266"/>
    </location>
</feature>
<feature type="topological domain" description="Extracellular" evidence="1">
    <location>
        <begin position="267"/>
        <end position="275"/>
    </location>
</feature>
<feature type="transmembrane region" description="Helical" evidence="1">
    <location>
        <begin position="276"/>
        <end position="296"/>
    </location>
</feature>
<feature type="topological domain" description="Cytoplasmic" evidence="1">
    <location>
        <begin position="297"/>
        <end position="305"/>
    </location>
</feature>
<feature type="transmembrane region" description="Helical" evidence="1">
    <location>
        <begin position="306"/>
        <end position="326"/>
    </location>
</feature>
<feature type="topological domain" description="Extracellular" evidence="1">
    <location>
        <begin position="327"/>
        <end position="335"/>
    </location>
</feature>
<feature type="transmembrane region" description="Helical" evidence="1">
    <location>
        <begin position="336"/>
        <end position="356"/>
    </location>
</feature>
<feature type="topological domain" description="Cytoplasmic" evidence="1">
    <location>
        <begin position="357"/>
        <end position="416"/>
    </location>
</feature>
<feature type="transmembrane region" description="Helical" evidence="1">
    <location>
        <begin position="417"/>
        <end position="437"/>
    </location>
</feature>
<feature type="topological domain" description="Extracellular" evidence="1">
    <location>
        <begin position="438"/>
        <end position="446"/>
    </location>
</feature>
<feature type="transmembrane region" description="Helical" evidence="1">
    <location>
        <begin position="447"/>
        <end position="467"/>
    </location>
</feature>
<feature type="topological domain" description="Cytoplasmic" evidence="1">
    <location>
        <begin position="468"/>
        <end position="487"/>
    </location>
</feature>
<feature type="transmembrane region" description="Helical" evidence="1">
    <location>
        <begin position="488"/>
        <end position="508"/>
    </location>
</feature>
<feature type="topological domain" description="Extracellular" evidence="1">
    <location>
        <begin position="509"/>
        <end position="512"/>
    </location>
</feature>
<feature type="transmembrane region" description="Helical" evidence="1">
    <location>
        <begin position="513"/>
        <end position="533"/>
    </location>
</feature>
<feature type="topological domain" description="Cytoplasmic" evidence="1">
    <location>
        <begin position="534"/>
        <end position="550"/>
    </location>
</feature>
<feature type="transmembrane region" description="Helical" evidence="1">
    <location>
        <begin position="551"/>
        <end position="571"/>
    </location>
</feature>
<feature type="topological domain" description="Extracellular" evidence="1">
    <location>
        <begin position="572"/>
        <end position="583"/>
    </location>
</feature>
<feature type="transmembrane region" description="Helical" evidence="1">
    <location>
        <begin position="584"/>
        <end position="604"/>
    </location>
</feature>
<feature type="topological domain" description="Cytoplasmic" evidence="1">
    <location>
        <begin position="605"/>
        <end position="622"/>
    </location>
</feature>
<feature type="region of interest" description="Disordered" evidence="2">
    <location>
        <begin position="1"/>
        <end position="76"/>
    </location>
</feature>
<feature type="region of interest" description="Disordered" evidence="2">
    <location>
        <begin position="105"/>
        <end position="152"/>
    </location>
</feature>
<feature type="compositionally biased region" description="Polar residues" evidence="2">
    <location>
        <begin position="1"/>
        <end position="47"/>
    </location>
</feature>
<feature type="modified residue" description="Phosphoserine" evidence="9 10 11">
    <location>
        <position position="55"/>
    </location>
</feature>
<feature type="modified residue" description="Phosphothreonine" evidence="11">
    <location>
        <position position="98"/>
    </location>
</feature>
<feature type="modified residue" description="Phosphoserine" evidence="11">
    <location>
        <position position="101"/>
    </location>
</feature>
<feature type="modified residue" description="Phosphoserine" evidence="11">
    <location>
        <position position="132"/>
    </location>
</feature>
<reference key="1">
    <citation type="journal article" date="1997" name="Nature">
        <title>The nucleotide sequence of Saccharomyces cerevisiae chromosome XVI.</title>
        <authorList>
            <person name="Bussey H."/>
            <person name="Storms R.K."/>
            <person name="Ahmed A."/>
            <person name="Albermann K."/>
            <person name="Allen E."/>
            <person name="Ansorge W."/>
            <person name="Araujo R."/>
            <person name="Aparicio A."/>
            <person name="Barrell B.G."/>
            <person name="Badcock K."/>
            <person name="Benes V."/>
            <person name="Botstein D."/>
            <person name="Bowman S."/>
            <person name="Brueckner M."/>
            <person name="Carpenter J."/>
            <person name="Cherry J.M."/>
            <person name="Chung E."/>
            <person name="Churcher C.M."/>
            <person name="Coster F."/>
            <person name="Davis K."/>
            <person name="Davis R.W."/>
            <person name="Dietrich F.S."/>
            <person name="Delius H."/>
            <person name="DiPaolo T."/>
            <person name="Dubois E."/>
            <person name="Duesterhoeft A."/>
            <person name="Duncan M."/>
            <person name="Floeth M."/>
            <person name="Fortin N."/>
            <person name="Friesen J.D."/>
            <person name="Fritz C."/>
            <person name="Goffeau A."/>
            <person name="Hall J."/>
            <person name="Hebling U."/>
            <person name="Heumann K."/>
            <person name="Hilbert H."/>
            <person name="Hillier L.W."/>
            <person name="Hunicke-Smith S."/>
            <person name="Hyman R.W."/>
            <person name="Johnston M."/>
            <person name="Kalman S."/>
            <person name="Kleine K."/>
            <person name="Komp C."/>
            <person name="Kurdi O."/>
            <person name="Lashkari D."/>
            <person name="Lew H."/>
            <person name="Lin A."/>
            <person name="Lin D."/>
            <person name="Louis E.J."/>
            <person name="Marathe R."/>
            <person name="Messenguy F."/>
            <person name="Mewes H.-W."/>
            <person name="Mirtipati S."/>
            <person name="Moestl D."/>
            <person name="Mueller-Auer S."/>
            <person name="Namath A."/>
            <person name="Nentwich U."/>
            <person name="Oefner P."/>
            <person name="Pearson D."/>
            <person name="Petel F.X."/>
            <person name="Pohl T.M."/>
            <person name="Purnelle B."/>
            <person name="Rajandream M.A."/>
            <person name="Rechmann S."/>
            <person name="Rieger M."/>
            <person name="Riles L."/>
            <person name="Roberts D."/>
            <person name="Schaefer M."/>
            <person name="Scharfe M."/>
            <person name="Scherens B."/>
            <person name="Schramm S."/>
            <person name="Schroeder M."/>
            <person name="Sdicu A.-M."/>
            <person name="Tettelin H."/>
            <person name="Urrestarazu L.A."/>
            <person name="Ushinsky S."/>
            <person name="Vierendeels F."/>
            <person name="Vissers S."/>
            <person name="Voss H."/>
            <person name="Walsh S.V."/>
            <person name="Wambutt R."/>
            <person name="Wang Y."/>
            <person name="Wedler E."/>
            <person name="Wedler H."/>
            <person name="Winnett E."/>
            <person name="Zhong W.-W."/>
            <person name="Zollner A."/>
            <person name="Vo D.H."/>
            <person name="Hani J."/>
        </authorList>
    </citation>
    <scope>NUCLEOTIDE SEQUENCE [LARGE SCALE GENOMIC DNA]</scope>
    <source>
        <strain>ATCC 204508 / S288c</strain>
    </source>
</reference>
<reference key="2">
    <citation type="journal article" date="2014" name="G3 (Bethesda)">
        <title>The reference genome sequence of Saccharomyces cerevisiae: Then and now.</title>
        <authorList>
            <person name="Engel S.R."/>
            <person name="Dietrich F.S."/>
            <person name="Fisk D.G."/>
            <person name="Binkley G."/>
            <person name="Balakrishnan R."/>
            <person name="Costanzo M.C."/>
            <person name="Dwight S.S."/>
            <person name="Hitz B.C."/>
            <person name="Karra K."/>
            <person name="Nash R.S."/>
            <person name="Weng S."/>
            <person name="Wong E.D."/>
            <person name="Lloyd P."/>
            <person name="Skrzypek M.S."/>
            <person name="Miyasato S.R."/>
            <person name="Simison M."/>
            <person name="Cherry J.M."/>
        </authorList>
    </citation>
    <scope>GENOME REANNOTATION</scope>
    <source>
        <strain>ATCC 204508 / S288c</strain>
    </source>
</reference>
<reference key="3">
    <citation type="journal article" date="2007" name="Genome Res.">
        <title>Approaching a complete repository of sequence-verified protein-encoding clones for Saccharomyces cerevisiae.</title>
        <authorList>
            <person name="Hu Y."/>
            <person name="Rolfs A."/>
            <person name="Bhullar B."/>
            <person name="Murthy T.V.S."/>
            <person name="Zhu C."/>
            <person name="Berger M.F."/>
            <person name="Camargo A.A."/>
            <person name="Kelley F."/>
            <person name="McCarron S."/>
            <person name="Jepson D."/>
            <person name="Richardson A."/>
            <person name="Raphael J."/>
            <person name="Moreira D."/>
            <person name="Taycher E."/>
            <person name="Zuo D."/>
            <person name="Mohr S."/>
            <person name="Kane M.F."/>
            <person name="Williamson J."/>
            <person name="Simpson A.J.G."/>
            <person name="Bulyk M.L."/>
            <person name="Harlow E."/>
            <person name="Marsischky G."/>
            <person name="Kolodner R.D."/>
            <person name="LaBaer J."/>
        </authorList>
    </citation>
    <scope>NUCLEOTIDE SEQUENCE [GENOMIC DNA]</scope>
    <source>
        <strain>ATCC 204508 / S288c</strain>
    </source>
</reference>
<reference key="4">
    <citation type="journal article" date="2001" name="Biochem. J.">
        <title>Multiple polyamine transport systems on the vacuolar membrane in yeast.</title>
        <authorList>
            <person name="Tomitori H."/>
            <person name="Kashiwagi K."/>
            <person name="Asakawa T."/>
            <person name="Kakinuma Y."/>
            <person name="Michael A.J."/>
            <person name="Igarashi K."/>
        </authorList>
    </citation>
    <scope>FUNCTION</scope>
</reference>
<reference key="5">
    <citation type="journal article" date="2003" name="J. Biol. Chem.">
        <title>Localization and function of the yeast multidrug transporter Tpo1p.</title>
        <authorList>
            <person name="Albertsen M."/>
            <person name="Bellahn I."/>
            <person name="Kraemer R."/>
            <person name="Waffenschmidt S."/>
        </authorList>
    </citation>
    <scope>FUNCTION</scope>
    <scope>SUBCELLULAR LOCATION</scope>
</reference>
<reference key="6">
    <citation type="journal article" date="2003" name="Nature">
        <title>Global analysis of protein localization in budding yeast.</title>
        <authorList>
            <person name="Huh W.-K."/>
            <person name="Falvo J.V."/>
            <person name="Gerke L.C."/>
            <person name="Carroll A.S."/>
            <person name="Howson R.W."/>
            <person name="Weissman J.S."/>
            <person name="O'Shea E.K."/>
        </authorList>
    </citation>
    <scope>SUBCELLULAR LOCATION [LARGE SCALE ANALYSIS]</scope>
</reference>
<reference key="7">
    <citation type="journal article" date="2003" name="Nature">
        <title>Global analysis of protein expression in yeast.</title>
        <authorList>
            <person name="Ghaemmaghami S."/>
            <person name="Huh W.-K."/>
            <person name="Bower K."/>
            <person name="Howson R.W."/>
            <person name="Belle A."/>
            <person name="Dephoure N."/>
            <person name="O'Shea E.K."/>
            <person name="Weissman J.S."/>
        </authorList>
    </citation>
    <scope>LEVEL OF PROTEIN EXPRESSION [LARGE SCALE ANALYSIS]</scope>
</reference>
<reference key="8">
    <citation type="journal article" date="2004" name="Appl. Environ. Microbiol.">
        <title>Exposure of Saccharomyces cerevisiae to acetaldehyde induces sulfur amino acid metabolism and polyamine transporter genes, which depend on Met4p and Haa1p transcription factors, respectively.</title>
        <authorList>
            <person name="Aranda A."/>
            <person name="del Olmo M."/>
        </authorList>
    </citation>
    <scope>INDUCTION</scope>
</reference>
<reference key="9">
    <citation type="journal article" date="2006" name="Proc. Natl. Acad. Sci. U.S.A.">
        <title>A global topology map of the Saccharomyces cerevisiae membrane proteome.</title>
        <authorList>
            <person name="Kim H."/>
            <person name="Melen K."/>
            <person name="Oesterberg M."/>
            <person name="von Heijne G."/>
        </authorList>
    </citation>
    <scope>TOPOLOGY [LARGE SCALE ANALYSIS]</scope>
    <source>
        <strain>ATCC 208353 / W303-1A</strain>
    </source>
</reference>
<reference key="10">
    <citation type="journal article" date="2007" name="J. Proteome Res.">
        <title>Large-scale phosphorylation analysis of alpha-factor-arrested Saccharomyces cerevisiae.</title>
        <authorList>
            <person name="Li X."/>
            <person name="Gerber S.A."/>
            <person name="Rudner A.D."/>
            <person name="Beausoleil S.A."/>
            <person name="Haas W."/>
            <person name="Villen J."/>
            <person name="Elias J.E."/>
            <person name="Gygi S.P."/>
        </authorList>
    </citation>
    <scope>PHOSPHORYLATION [LARGE SCALE ANALYSIS] AT SER-55</scope>
    <scope>IDENTIFICATION BY MASS SPECTROMETRY [LARGE SCALE ANALYSIS]</scope>
    <source>
        <strain>ADR376</strain>
    </source>
</reference>
<reference key="11">
    <citation type="journal article" date="2008" name="Mol. Cell. Proteomics">
        <title>A multidimensional chromatography technology for in-depth phosphoproteome analysis.</title>
        <authorList>
            <person name="Albuquerque C.P."/>
            <person name="Smolka M.B."/>
            <person name="Payne S.H."/>
            <person name="Bafna V."/>
            <person name="Eng J."/>
            <person name="Zhou H."/>
        </authorList>
    </citation>
    <scope>PHOSPHORYLATION [LARGE SCALE ANALYSIS] AT SER-55</scope>
    <scope>IDENTIFICATION BY MASS SPECTROMETRY [LARGE SCALE ANALYSIS]</scope>
</reference>
<reference key="12">
    <citation type="journal article" date="2009" name="Science">
        <title>Global analysis of Cdk1 substrate phosphorylation sites provides insights into evolution.</title>
        <authorList>
            <person name="Holt L.J."/>
            <person name="Tuch B.B."/>
            <person name="Villen J."/>
            <person name="Johnson A.D."/>
            <person name="Gygi S.P."/>
            <person name="Morgan D.O."/>
        </authorList>
    </citation>
    <scope>PHOSPHORYLATION [LARGE SCALE ANALYSIS] AT SER-55; THR-98; SER-101 AND SER-132</scope>
    <scope>IDENTIFICATION BY MASS SPECTROMETRY [LARGE SCALE ANALYSIS]</scope>
</reference>
<protein>
    <recommendedName>
        <fullName>Polyamine transporter 3</fullName>
    </recommendedName>
</protein>